<proteinExistence type="inferred from homology"/>
<gene>
    <name evidence="1" type="primary">ilvD</name>
    <name type="ordered locus">SYNW1123</name>
</gene>
<feature type="chain" id="PRO_0000103519" description="Dihydroxy-acid dehydratase">
    <location>
        <begin position="1"/>
        <end position="557"/>
    </location>
</feature>
<feature type="active site" description="Proton acceptor" evidence="1">
    <location>
        <position position="470"/>
    </location>
</feature>
<feature type="binding site" evidence="1">
    <location>
        <position position="47"/>
    </location>
    <ligand>
        <name>[2Fe-2S] cluster</name>
        <dbReference type="ChEBI" id="CHEBI:190135"/>
    </ligand>
</feature>
<feature type="binding site" evidence="1">
    <location>
        <position position="79"/>
    </location>
    <ligand>
        <name>Mg(2+)</name>
        <dbReference type="ChEBI" id="CHEBI:18420"/>
    </ligand>
</feature>
<feature type="binding site" evidence="1">
    <location>
        <position position="120"/>
    </location>
    <ligand>
        <name>[2Fe-2S] cluster</name>
        <dbReference type="ChEBI" id="CHEBI:190135"/>
    </ligand>
</feature>
<feature type="binding site" evidence="1">
    <location>
        <position position="121"/>
    </location>
    <ligand>
        <name>Mg(2+)</name>
        <dbReference type="ChEBI" id="CHEBI:18420"/>
    </ligand>
</feature>
<feature type="binding site" description="via carbamate group" evidence="1">
    <location>
        <position position="122"/>
    </location>
    <ligand>
        <name>Mg(2+)</name>
        <dbReference type="ChEBI" id="CHEBI:18420"/>
    </ligand>
</feature>
<feature type="binding site" evidence="1">
    <location>
        <position position="192"/>
    </location>
    <ligand>
        <name>[2Fe-2S] cluster</name>
        <dbReference type="ChEBI" id="CHEBI:190135"/>
    </ligand>
</feature>
<feature type="binding site" evidence="1">
    <location>
        <position position="444"/>
    </location>
    <ligand>
        <name>Mg(2+)</name>
        <dbReference type="ChEBI" id="CHEBI:18420"/>
    </ligand>
</feature>
<feature type="modified residue" description="N6-carboxylysine" evidence="1">
    <location>
        <position position="122"/>
    </location>
</feature>
<sequence>MLRSDAVTKGIQRSPNRAMLRAVGFGDEDFGKPILGIANGYSTITPCNVGLNDLSRRAEEAARQAGGMPQMFGTITVSDGISMGTEGMKYSLVSREVIADAIETACNGQSMDGVLAVGGCDKNMPGAMLAMARMNIPAVFVYGGTIKPGKLGGCDLTVVSAFEAVGQLTSGNIDEDQLTAVEKNACPGAGSCGGMFTANTMSAAIETMGLSLPYSSTMAAEDEEKADNAARSAEVLLDAVKANIRPLDLLTNDAFENAISVIMAVGGSTNAVLHLLAIARTAGVSLSIDDFERIRQRVPVICDLKPSGRYVTVDLHNAGGIPQVMRLLLDAGLLHGDCRTVEGKSLREVLADVPSVPPADQDVIRPLSNPLYGKGHLAILKGNLASEGSVAKISGVKTPVLTGPARVFESEEDCLAAILDQRIKAGDVVVVRNEGPVGGPGMREMLAPTSAIVGQGLGDRVALITDGRFSGGTYGLVVGHVAPEAAVGGTIGLVQGGDSITVDADQLLLQLNVDEAELTRRRAAWSKPEPRYRTGILGKYARLVSSSSRGAVTDQPD</sequence>
<evidence type="ECO:0000255" key="1">
    <source>
        <dbReference type="HAMAP-Rule" id="MF_00012"/>
    </source>
</evidence>
<accession>Q7U763</accession>
<dbReference type="EC" id="4.2.1.9" evidence="1"/>
<dbReference type="EMBL" id="BX569692">
    <property type="protein sequence ID" value="CAE07638.1"/>
    <property type="molecule type" value="Genomic_DNA"/>
</dbReference>
<dbReference type="RefSeq" id="WP_011127988.1">
    <property type="nucleotide sequence ID" value="NC_005070.1"/>
</dbReference>
<dbReference type="SMR" id="Q7U763"/>
<dbReference type="STRING" id="84588.SYNW1123"/>
<dbReference type="KEGG" id="syw:SYNW1123"/>
<dbReference type="eggNOG" id="COG0129">
    <property type="taxonomic scope" value="Bacteria"/>
</dbReference>
<dbReference type="HOGENOM" id="CLU_014271_4_1_3"/>
<dbReference type="UniPathway" id="UPA00047">
    <property type="reaction ID" value="UER00057"/>
</dbReference>
<dbReference type="UniPathway" id="UPA00049">
    <property type="reaction ID" value="UER00061"/>
</dbReference>
<dbReference type="Proteomes" id="UP000001422">
    <property type="component" value="Chromosome"/>
</dbReference>
<dbReference type="GO" id="GO:0051537">
    <property type="term" value="F:2 iron, 2 sulfur cluster binding"/>
    <property type="evidence" value="ECO:0007669"/>
    <property type="project" value="UniProtKB-UniRule"/>
</dbReference>
<dbReference type="GO" id="GO:0004160">
    <property type="term" value="F:dihydroxy-acid dehydratase activity"/>
    <property type="evidence" value="ECO:0007669"/>
    <property type="project" value="UniProtKB-UniRule"/>
</dbReference>
<dbReference type="GO" id="GO:0000287">
    <property type="term" value="F:magnesium ion binding"/>
    <property type="evidence" value="ECO:0007669"/>
    <property type="project" value="UniProtKB-UniRule"/>
</dbReference>
<dbReference type="GO" id="GO:0009097">
    <property type="term" value="P:isoleucine biosynthetic process"/>
    <property type="evidence" value="ECO:0007669"/>
    <property type="project" value="UniProtKB-UniRule"/>
</dbReference>
<dbReference type="GO" id="GO:0009099">
    <property type="term" value="P:L-valine biosynthetic process"/>
    <property type="evidence" value="ECO:0007669"/>
    <property type="project" value="UniProtKB-UniRule"/>
</dbReference>
<dbReference type="FunFam" id="3.50.30.80:FF:000001">
    <property type="entry name" value="Dihydroxy-acid dehydratase"/>
    <property type="match status" value="1"/>
</dbReference>
<dbReference type="Gene3D" id="3.50.30.80">
    <property type="entry name" value="IlvD/EDD C-terminal domain-like"/>
    <property type="match status" value="1"/>
</dbReference>
<dbReference type="HAMAP" id="MF_00012">
    <property type="entry name" value="IlvD"/>
    <property type="match status" value="1"/>
</dbReference>
<dbReference type="InterPro" id="IPR050165">
    <property type="entry name" value="DHAD_IlvD/Edd"/>
</dbReference>
<dbReference type="InterPro" id="IPR042096">
    <property type="entry name" value="Dihydro-acid_dehy_C"/>
</dbReference>
<dbReference type="InterPro" id="IPR004404">
    <property type="entry name" value="DihydroxyA_deHydtase"/>
</dbReference>
<dbReference type="InterPro" id="IPR020558">
    <property type="entry name" value="DiOHA_6PGluconate_deHydtase_CS"/>
</dbReference>
<dbReference type="InterPro" id="IPR056740">
    <property type="entry name" value="ILV_EDD_C"/>
</dbReference>
<dbReference type="InterPro" id="IPR000581">
    <property type="entry name" value="ILV_EDD_N"/>
</dbReference>
<dbReference type="InterPro" id="IPR037237">
    <property type="entry name" value="IlvD/EDD_N"/>
</dbReference>
<dbReference type="NCBIfam" id="TIGR00110">
    <property type="entry name" value="ilvD"/>
    <property type="match status" value="1"/>
</dbReference>
<dbReference type="NCBIfam" id="NF002068">
    <property type="entry name" value="PRK00911.1"/>
    <property type="match status" value="1"/>
</dbReference>
<dbReference type="PANTHER" id="PTHR21000">
    <property type="entry name" value="DIHYDROXY-ACID DEHYDRATASE DAD"/>
    <property type="match status" value="1"/>
</dbReference>
<dbReference type="PANTHER" id="PTHR21000:SF5">
    <property type="entry name" value="DIHYDROXY-ACID DEHYDRATASE, MITOCHONDRIAL"/>
    <property type="match status" value="1"/>
</dbReference>
<dbReference type="Pfam" id="PF24877">
    <property type="entry name" value="ILV_EDD_C"/>
    <property type="match status" value="1"/>
</dbReference>
<dbReference type="Pfam" id="PF00920">
    <property type="entry name" value="ILVD_EDD_N"/>
    <property type="match status" value="1"/>
</dbReference>
<dbReference type="SUPFAM" id="SSF143975">
    <property type="entry name" value="IlvD/EDD N-terminal domain-like"/>
    <property type="match status" value="1"/>
</dbReference>
<dbReference type="SUPFAM" id="SSF52016">
    <property type="entry name" value="LeuD/IlvD-like"/>
    <property type="match status" value="1"/>
</dbReference>
<dbReference type="PROSITE" id="PS00886">
    <property type="entry name" value="ILVD_EDD_1"/>
    <property type="match status" value="1"/>
</dbReference>
<dbReference type="PROSITE" id="PS00887">
    <property type="entry name" value="ILVD_EDD_2"/>
    <property type="match status" value="1"/>
</dbReference>
<comment type="function">
    <text evidence="1">Functions in the biosynthesis of branched-chain amino acids. Catalyzes the dehydration of (2R,3R)-2,3-dihydroxy-3-methylpentanoate (2,3-dihydroxy-3-methylvalerate) into 2-oxo-3-methylpentanoate (2-oxo-3-methylvalerate) and of (2R)-2,3-dihydroxy-3-methylbutanoate (2,3-dihydroxyisovalerate) into 2-oxo-3-methylbutanoate (2-oxoisovalerate), the penultimate precursor to L-isoleucine and L-valine, respectively.</text>
</comment>
<comment type="catalytic activity">
    <reaction evidence="1">
        <text>(2R)-2,3-dihydroxy-3-methylbutanoate = 3-methyl-2-oxobutanoate + H2O</text>
        <dbReference type="Rhea" id="RHEA:24809"/>
        <dbReference type="ChEBI" id="CHEBI:11851"/>
        <dbReference type="ChEBI" id="CHEBI:15377"/>
        <dbReference type="ChEBI" id="CHEBI:49072"/>
        <dbReference type="EC" id="4.2.1.9"/>
    </reaction>
    <physiologicalReaction direction="left-to-right" evidence="1">
        <dbReference type="Rhea" id="RHEA:24810"/>
    </physiologicalReaction>
</comment>
<comment type="catalytic activity">
    <reaction evidence="1">
        <text>(2R,3R)-2,3-dihydroxy-3-methylpentanoate = (S)-3-methyl-2-oxopentanoate + H2O</text>
        <dbReference type="Rhea" id="RHEA:27694"/>
        <dbReference type="ChEBI" id="CHEBI:15377"/>
        <dbReference type="ChEBI" id="CHEBI:35146"/>
        <dbReference type="ChEBI" id="CHEBI:49258"/>
        <dbReference type="EC" id="4.2.1.9"/>
    </reaction>
    <physiologicalReaction direction="left-to-right" evidence="1">
        <dbReference type="Rhea" id="RHEA:27695"/>
    </physiologicalReaction>
</comment>
<comment type="cofactor">
    <cofactor evidence="1">
        <name>[2Fe-2S] cluster</name>
        <dbReference type="ChEBI" id="CHEBI:190135"/>
    </cofactor>
    <text evidence="1">Binds 1 [2Fe-2S] cluster per subunit. This cluster acts as a Lewis acid cofactor.</text>
</comment>
<comment type="cofactor">
    <cofactor evidence="1">
        <name>Mg(2+)</name>
        <dbReference type="ChEBI" id="CHEBI:18420"/>
    </cofactor>
</comment>
<comment type="pathway">
    <text evidence="1">Amino-acid biosynthesis; L-isoleucine biosynthesis; L-isoleucine from 2-oxobutanoate: step 3/4.</text>
</comment>
<comment type="pathway">
    <text evidence="1">Amino-acid biosynthesis; L-valine biosynthesis; L-valine from pyruvate: step 3/4.</text>
</comment>
<comment type="subunit">
    <text evidence="1">Homodimer.</text>
</comment>
<comment type="similarity">
    <text evidence="1">Belongs to the IlvD/Edd family.</text>
</comment>
<name>ILVD_PARMW</name>
<organism>
    <name type="scientific">Parasynechococcus marenigrum (strain WH8102)</name>
    <dbReference type="NCBI Taxonomy" id="84588"/>
    <lineage>
        <taxon>Bacteria</taxon>
        <taxon>Bacillati</taxon>
        <taxon>Cyanobacteriota</taxon>
        <taxon>Cyanophyceae</taxon>
        <taxon>Synechococcales</taxon>
        <taxon>Prochlorococcaceae</taxon>
        <taxon>Parasynechococcus</taxon>
        <taxon>Parasynechococcus marenigrum</taxon>
    </lineage>
</organism>
<protein>
    <recommendedName>
        <fullName evidence="1">Dihydroxy-acid dehydratase</fullName>
        <shortName evidence="1">DAD</shortName>
        <ecNumber evidence="1">4.2.1.9</ecNumber>
    </recommendedName>
</protein>
<reference key="1">
    <citation type="journal article" date="2003" name="Nature">
        <title>The genome of a motile marine Synechococcus.</title>
        <authorList>
            <person name="Palenik B."/>
            <person name="Brahamsha B."/>
            <person name="Larimer F.W."/>
            <person name="Land M.L."/>
            <person name="Hauser L."/>
            <person name="Chain P."/>
            <person name="Lamerdin J.E."/>
            <person name="Regala W."/>
            <person name="Allen E.E."/>
            <person name="McCarren J."/>
            <person name="Paulsen I.T."/>
            <person name="Dufresne A."/>
            <person name="Partensky F."/>
            <person name="Webb E.A."/>
            <person name="Waterbury J."/>
        </authorList>
    </citation>
    <scope>NUCLEOTIDE SEQUENCE [LARGE SCALE GENOMIC DNA]</scope>
    <source>
        <strain>WH8102</strain>
    </source>
</reference>
<keyword id="KW-0001">2Fe-2S</keyword>
<keyword id="KW-0028">Amino-acid biosynthesis</keyword>
<keyword id="KW-0100">Branched-chain amino acid biosynthesis</keyword>
<keyword id="KW-0408">Iron</keyword>
<keyword id="KW-0411">Iron-sulfur</keyword>
<keyword id="KW-0456">Lyase</keyword>
<keyword id="KW-0460">Magnesium</keyword>
<keyword id="KW-0479">Metal-binding</keyword>